<proteinExistence type="predicted"/>
<reference key="1">
    <citation type="journal article" date="2000" name="DNA Res.">
        <title>Structural analysis of Arabidopsis thaliana chromosome 3. II. Sequence features of the 4,251,695 bp regions covered by 90 P1, TAC and BAC clones.</title>
        <authorList>
            <person name="Kaneko T."/>
            <person name="Katoh T."/>
            <person name="Sato S."/>
            <person name="Nakamura Y."/>
            <person name="Asamizu E."/>
            <person name="Tabata S."/>
        </authorList>
    </citation>
    <scope>NUCLEOTIDE SEQUENCE [LARGE SCALE GENOMIC DNA]</scope>
    <source>
        <strain>cv. Columbia</strain>
    </source>
</reference>
<reference key="2">
    <citation type="journal article" date="2017" name="Plant J.">
        <title>Araport11: a complete reannotation of the Arabidopsis thaliana reference genome.</title>
        <authorList>
            <person name="Cheng C.Y."/>
            <person name="Krishnakumar V."/>
            <person name="Chan A.P."/>
            <person name="Thibaud-Nissen F."/>
            <person name="Schobel S."/>
            <person name="Town C.D."/>
        </authorList>
    </citation>
    <scope>GENOME REANNOTATION</scope>
    <source>
        <strain>cv. Columbia</strain>
    </source>
</reference>
<sequence>MHLPEDLVLEILSKVPAVSLARFRSTCRRWNALVVDGSFAKKHYAYGPRQYPIVIMLIEFRVYLVSIDLHGINNNNGAPSAKLTGQFSLKDPLSNSSEEVDIRNAFHCDGLLLCCTKDRRLVVWNPCSGETKWIQPRNSYKESDLYALGYDNRSSSYKILRMHPVGNPFHIESEVYDFASHSWRSVGVTTDFHIQTNESYGMNVKGTTYWFALSKDWWSSDDRRFLLSFDFSRERFQCLPLPADVKNLHLTVVLSVTREEQQLCMFATLGAGNVYKLDVFVATKTEETTGELTWTKFRRFHSKICINVSADHEKKVLVPHHILLPYYNILHIVGEDIYIRQVNKDGDIGCPILLTYVPSLVQIQQGI</sequence>
<dbReference type="EMBL" id="AP000604">
    <property type="protein sequence ID" value="BAB01455.1"/>
    <property type="molecule type" value="Genomic_DNA"/>
</dbReference>
<dbReference type="EMBL" id="CP002686">
    <property type="protein sequence ID" value="AEE76464.1"/>
    <property type="molecule type" value="Genomic_DNA"/>
</dbReference>
<dbReference type="RefSeq" id="NP_188749.1">
    <property type="nucleotide sequence ID" value="NM_113006.1"/>
</dbReference>
<dbReference type="FunCoup" id="Q9LJC0">
    <property type="interactions" value="4"/>
</dbReference>
<dbReference type="PaxDb" id="3702-AT3G21120.1"/>
<dbReference type="ProteomicsDB" id="230866"/>
<dbReference type="EnsemblPlants" id="AT3G21120.1">
    <property type="protein sequence ID" value="AT3G21120.1"/>
    <property type="gene ID" value="AT3G21120"/>
</dbReference>
<dbReference type="GeneID" id="821664"/>
<dbReference type="Gramene" id="AT3G21120.1">
    <property type="protein sequence ID" value="AT3G21120.1"/>
    <property type="gene ID" value="AT3G21120"/>
</dbReference>
<dbReference type="KEGG" id="ath:AT3G21120"/>
<dbReference type="Araport" id="AT3G21120"/>
<dbReference type="TAIR" id="AT3G21120"/>
<dbReference type="HOGENOM" id="CLU_034692_1_0_1"/>
<dbReference type="InParanoid" id="Q9LJC0"/>
<dbReference type="OMA" id="HIAGEDK"/>
<dbReference type="PhylomeDB" id="Q9LJC0"/>
<dbReference type="PRO" id="PR:Q9LJC0"/>
<dbReference type="Proteomes" id="UP000006548">
    <property type="component" value="Chromosome 3"/>
</dbReference>
<dbReference type="ExpressionAtlas" id="Q9LJC0">
    <property type="expression patterns" value="differential"/>
</dbReference>
<dbReference type="CDD" id="cd22157">
    <property type="entry name" value="F-box_AtFBW1-like"/>
    <property type="match status" value="1"/>
</dbReference>
<dbReference type="Gene3D" id="1.20.1280.50">
    <property type="match status" value="1"/>
</dbReference>
<dbReference type="InterPro" id="IPR006527">
    <property type="entry name" value="F-box-assoc_dom_typ1"/>
</dbReference>
<dbReference type="InterPro" id="IPR017451">
    <property type="entry name" value="F-box-assoc_interact_dom"/>
</dbReference>
<dbReference type="InterPro" id="IPR036047">
    <property type="entry name" value="F-box-like_dom_sf"/>
</dbReference>
<dbReference type="InterPro" id="IPR001810">
    <property type="entry name" value="F-box_dom"/>
</dbReference>
<dbReference type="InterPro" id="IPR050796">
    <property type="entry name" value="SCF_F-box_component"/>
</dbReference>
<dbReference type="NCBIfam" id="TIGR01640">
    <property type="entry name" value="F_box_assoc_1"/>
    <property type="match status" value="1"/>
</dbReference>
<dbReference type="PANTHER" id="PTHR31672">
    <property type="entry name" value="BNACNNG10540D PROTEIN"/>
    <property type="match status" value="1"/>
</dbReference>
<dbReference type="PANTHER" id="PTHR31672:SF13">
    <property type="entry name" value="F-BOX PROTEIN CPR30-LIKE"/>
    <property type="match status" value="1"/>
</dbReference>
<dbReference type="Pfam" id="PF00646">
    <property type="entry name" value="F-box"/>
    <property type="match status" value="1"/>
</dbReference>
<dbReference type="Pfam" id="PF07734">
    <property type="entry name" value="FBA_1"/>
    <property type="match status" value="1"/>
</dbReference>
<dbReference type="SMART" id="SM00256">
    <property type="entry name" value="FBOX"/>
    <property type="match status" value="1"/>
</dbReference>
<dbReference type="SUPFAM" id="SSF81383">
    <property type="entry name" value="F-box domain"/>
    <property type="match status" value="1"/>
</dbReference>
<dbReference type="PROSITE" id="PS50181">
    <property type="entry name" value="FBOX"/>
    <property type="match status" value="1"/>
</dbReference>
<gene>
    <name type="ordered locus">At3g21120</name>
    <name type="ORF">MSA6.16</name>
</gene>
<evidence type="ECO:0000255" key="1">
    <source>
        <dbReference type="PROSITE-ProRule" id="PRU00080"/>
    </source>
</evidence>
<name>FB170_ARATH</name>
<organism>
    <name type="scientific">Arabidopsis thaliana</name>
    <name type="common">Mouse-ear cress</name>
    <dbReference type="NCBI Taxonomy" id="3702"/>
    <lineage>
        <taxon>Eukaryota</taxon>
        <taxon>Viridiplantae</taxon>
        <taxon>Streptophyta</taxon>
        <taxon>Embryophyta</taxon>
        <taxon>Tracheophyta</taxon>
        <taxon>Spermatophyta</taxon>
        <taxon>Magnoliopsida</taxon>
        <taxon>eudicotyledons</taxon>
        <taxon>Gunneridae</taxon>
        <taxon>Pentapetalae</taxon>
        <taxon>rosids</taxon>
        <taxon>malvids</taxon>
        <taxon>Brassicales</taxon>
        <taxon>Brassicaceae</taxon>
        <taxon>Camelineae</taxon>
        <taxon>Arabidopsis</taxon>
    </lineage>
</organism>
<protein>
    <recommendedName>
        <fullName>Putative F-box protein At3g21120</fullName>
    </recommendedName>
</protein>
<keyword id="KW-1185">Reference proteome</keyword>
<feature type="chain" id="PRO_0000283440" description="Putative F-box protein At3g21120">
    <location>
        <begin position="1"/>
        <end position="367"/>
    </location>
</feature>
<feature type="domain" description="F-box" evidence="1">
    <location>
        <begin position="1"/>
        <end position="43"/>
    </location>
</feature>
<accession>Q9LJC0</accession>